<organism>
    <name type="scientific">Treponema pallidum (strain Nichols)</name>
    <dbReference type="NCBI Taxonomy" id="243276"/>
    <lineage>
        <taxon>Bacteria</taxon>
        <taxon>Pseudomonadati</taxon>
        <taxon>Spirochaetota</taxon>
        <taxon>Spirochaetia</taxon>
        <taxon>Spirochaetales</taxon>
        <taxon>Treponemataceae</taxon>
        <taxon>Treponema</taxon>
    </lineage>
</organism>
<feature type="chain" id="PRO_0000178753" description="Fructose-bisphosphate aldolase">
    <location>
        <begin position="1"/>
        <end position="332"/>
    </location>
</feature>
<feature type="active site" description="Proton donor" evidence="1">
    <location>
        <position position="93"/>
    </location>
</feature>
<feature type="binding site" evidence="1">
    <location>
        <position position="56"/>
    </location>
    <ligand>
        <name>D-glyceraldehyde 3-phosphate</name>
        <dbReference type="ChEBI" id="CHEBI:59776"/>
    </ligand>
</feature>
<feature type="binding site" evidence="1">
    <location>
        <position position="94"/>
    </location>
    <ligand>
        <name>Zn(2+)</name>
        <dbReference type="ChEBI" id="CHEBI:29105"/>
        <label>1</label>
        <note>catalytic</note>
    </ligand>
</feature>
<feature type="binding site" evidence="1">
    <location>
        <position position="115"/>
    </location>
    <ligand>
        <name>Zn(2+)</name>
        <dbReference type="ChEBI" id="CHEBI:29105"/>
        <label>2</label>
    </ligand>
</feature>
<feature type="binding site" evidence="1">
    <location>
        <position position="147"/>
    </location>
    <ligand>
        <name>Zn(2+)</name>
        <dbReference type="ChEBI" id="CHEBI:29105"/>
        <label>2</label>
    </ligand>
</feature>
<feature type="binding site" evidence="1">
    <location>
        <position position="191"/>
    </location>
    <ligand>
        <name>Zn(2+)</name>
        <dbReference type="ChEBI" id="CHEBI:29105"/>
        <label>1</label>
        <note>catalytic</note>
    </ligand>
</feature>
<feature type="binding site" evidence="1">
    <location>
        <position position="192"/>
    </location>
    <ligand>
        <name>dihydroxyacetone phosphate</name>
        <dbReference type="ChEBI" id="CHEBI:57642"/>
    </ligand>
</feature>
<feature type="binding site" evidence="1">
    <location>
        <position position="234"/>
    </location>
    <ligand>
        <name>Zn(2+)</name>
        <dbReference type="ChEBI" id="CHEBI:29105"/>
        <label>1</label>
        <note>catalytic</note>
    </ligand>
</feature>
<feature type="binding site" evidence="1">
    <location>
        <begin position="235"/>
        <end position="237"/>
    </location>
    <ligand>
        <name>dihydroxyacetone phosphate</name>
        <dbReference type="ChEBI" id="CHEBI:57642"/>
    </ligand>
</feature>
<feature type="binding site" evidence="1">
    <location>
        <begin position="277"/>
        <end position="280"/>
    </location>
    <ligand>
        <name>dihydroxyacetone phosphate</name>
        <dbReference type="ChEBI" id="CHEBI:57642"/>
    </ligand>
</feature>
<reference key="1">
    <citation type="journal article" date="1998" name="Science">
        <title>Complete genome sequence of Treponema pallidum, the syphilis spirochete.</title>
        <authorList>
            <person name="Fraser C.M."/>
            <person name="Norris S.J."/>
            <person name="Weinstock G.M."/>
            <person name="White O."/>
            <person name="Sutton G.G."/>
            <person name="Dodson R.J."/>
            <person name="Gwinn M.L."/>
            <person name="Hickey E.K."/>
            <person name="Clayton R.A."/>
            <person name="Ketchum K.A."/>
            <person name="Sodergren E."/>
            <person name="Hardham J.M."/>
            <person name="McLeod M.P."/>
            <person name="Salzberg S.L."/>
            <person name="Peterson J.D."/>
            <person name="Khalak H.G."/>
            <person name="Richardson D.L."/>
            <person name="Howell J.K."/>
            <person name="Chidambaram M."/>
            <person name="Utterback T.R."/>
            <person name="McDonald L.A."/>
            <person name="Artiach P."/>
            <person name="Bowman C."/>
            <person name="Cotton M.D."/>
            <person name="Fujii C."/>
            <person name="Garland S.A."/>
            <person name="Hatch B."/>
            <person name="Horst K."/>
            <person name="Roberts K.M."/>
            <person name="Sandusky M."/>
            <person name="Weidman J.F."/>
            <person name="Smith H.O."/>
            <person name="Venter J.C."/>
        </authorList>
    </citation>
    <scope>NUCLEOTIDE SEQUENCE [LARGE SCALE GENOMIC DNA]</scope>
    <source>
        <strain>Nichols</strain>
    </source>
</reference>
<name>ALF_TREPA</name>
<protein>
    <recommendedName>
        <fullName>Fructose-bisphosphate aldolase</fullName>
        <shortName>FBP aldolase</shortName>
        <shortName>FBPA</shortName>
        <ecNumber>4.1.2.13</ecNumber>
    </recommendedName>
    <alternativeName>
        <fullName>Fructose-1,6-bisphosphate aldolase</fullName>
    </alternativeName>
</protein>
<accession>O83668</accession>
<comment type="function">
    <text evidence="1">Catalyzes the aldol condensation of dihydroxyacetone phosphate (DHAP or glycerone-phosphate) with glyceraldehyde 3-phosphate (G3P) to form fructose 1,6-bisphosphate (FBP) in gluconeogenesis and the reverse reaction in glycolysis.</text>
</comment>
<comment type="catalytic activity">
    <reaction>
        <text>beta-D-fructose 1,6-bisphosphate = D-glyceraldehyde 3-phosphate + dihydroxyacetone phosphate</text>
        <dbReference type="Rhea" id="RHEA:14729"/>
        <dbReference type="ChEBI" id="CHEBI:32966"/>
        <dbReference type="ChEBI" id="CHEBI:57642"/>
        <dbReference type="ChEBI" id="CHEBI:59776"/>
        <dbReference type="EC" id="4.1.2.13"/>
    </reaction>
</comment>
<comment type="cofactor">
    <cofactor evidence="1">
        <name>Zn(2+)</name>
        <dbReference type="ChEBI" id="CHEBI:29105"/>
    </cofactor>
    <text evidence="1">Binds 2 Zn(2+) ions per subunit. One is catalytic and the other provides a structural contribution.</text>
</comment>
<comment type="pathway">
    <text>Carbohydrate degradation; glycolysis; D-glyceraldehyde 3-phosphate and glycerone phosphate from D-glucose: step 4/4.</text>
</comment>
<comment type="subunit">
    <text evidence="1">Homodimer.</text>
</comment>
<comment type="similarity">
    <text evidence="2">Belongs to the class II fructose-bisphosphate aldolase family.</text>
</comment>
<keyword id="KW-0324">Glycolysis</keyword>
<keyword id="KW-0456">Lyase</keyword>
<keyword id="KW-0479">Metal-binding</keyword>
<keyword id="KW-1185">Reference proteome</keyword>
<keyword id="KW-0862">Zinc</keyword>
<proteinExistence type="inferred from homology"/>
<gene>
    <name type="primary">fba</name>
    <name type="synonym">fda</name>
    <name type="ordered locus">TP_0662</name>
</gene>
<dbReference type="EC" id="4.1.2.13"/>
<dbReference type="EMBL" id="AE000520">
    <property type="protein sequence ID" value="AAC65635.1"/>
    <property type="molecule type" value="Genomic_DNA"/>
</dbReference>
<dbReference type="PIR" id="G71297">
    <property type="entry name" value="G71297"/>
</dbReference>
<dbReference type="RefSeq" id="WP_010882107.1">
    <property type="nucleotide sequence ID" value="NC_021490.2"/>
</dbReference>
<dbReference type="SMR" id="O83668"/>
<dbReference type="IntAct" id="O83668">
    <property type="interactions" value="4"/>
</dbReference>
<dbReference type="STRING" id="243276.TP_0662"/>
<dbReference type="EnsemblBacteria" id="AAC65635">
    <property type="protein sequence ID" value="AAC65635"/>
    <property type="gene ID" value="TP_0662"/>
</dbReference>
<dbReference type="KEGG" id="tpa:TP_0662"/>
<dbReference type="KEGG" id="tpw:TPANIC_0662"/>
<dbReference type="eggNOG" id="COG0191">
    <property type="taxonomic scope" value="Bacteria"/>
</dbReference>
<dbReference type="HOGENOM" id="CLU_040088_0_0_12"/>
<dbReference type="OrthoDB" id="9803995at2"/>
<dbReference type="UniPathway" id="UPA00109">
    <property type="reaction ID" value="UER00183"/>
</dbReference>
<dbReference type="Proteomes" id="UP000000811">
    <property type="component" value="Chromosome"/>
</dbReference>
<dbReference type="GO" id="GO:0004332">
    <property type="term" value="F:fructose-bisphosphate aldolase activity"/>
    <property type="evidence" value="ECO:0007669"/>
    <property type="project" value="UniProtKB-EC"/>
</dbReference>
<dbReference type="GO" id="GO:0008270">
    <property type="term" value="F:zinc ion binding"/>
    <property type="evidence" value="ECO:0007669"/>
    <property type="project" value="InterPro"/>
</dbReference>
<dbReference type="GO" id="GO:0030388">
    <property type="term" value="P:fructose 1,6-bisphosphate metabolic process"/>
    <property type="evidence" value="ECO:0007669"/>
    <property type="project" value="InterPro"/>
</dbReference>
<dbReference type="GO" id="GO:0006096">
    <property type="term" value="P:glycolytic process"/>
    <property type="evidence" value="ECO:0007669"/>
    <property type="project" value="UniProtKB-UniPathway"/>
</dbReference>
<dbReference type="CDD" id="cd00947">
    <property type="entry name" value="TBP_aldolase_IIB"/>
    <property type="match status" value="1"/>
</dbReference>
<dbReference type="Gene3D" id="3.20.20.70">
    <property type="entry name" value="Aldolase class I"/>
    <property type="match status" value="1"/>
</dbReference>
<dbReference type="InterPro" id="IPR013785">
    <property type="entry name" value="Aldolase_TIM"/>
</dbReference>
<dbReference type="InterPro" id="IPR050246">
    <property type="entry name" value="Class_II_FBP_aldolase"/>
</dbReference>
<dbReference type="InterPro" id="IPR000771">
    <property type="entry name" value="FBA_II"/>
</dbReference>
<dbReference type="InterPro" id="IPR011289">
    <property type="entry name" value="Fruc_bis_ald_class-2"/>
</dbReference>
<dbReference type="NCBIfam" id="TIGR00167">
    <property type="entry name" value="cbbA"/>
    <property type="match status" value="1"/>
</dbReference>
<dbReference type="NCBIfam" id="TIGR01859">
    <property type="entry name" value="fruc_bis_ald"/>
    <property type="match status" value="1"/>
</dbReference>
<dbReference type="NCBIfam" id="NF005481">
    <property type="entry name" value="PRK07084.1"/>
    <property type="match status" value="1"/>
</dbReference>
<dbReference type="PANTHER" id="PTHR30304">
    <property type="entry name" value="D-TAGATOSE-1,6-BISPHOSPHATE ALDOLASE"/>
    <property type="match status" value="1"/>
</dbReference>
<dbReference type="PANTHER" id="PTHR30304:SF0">
    <property type="entry name" value="D-TAGATOSE-1,6-BISPHOSPHATE ALDOLASE SUBUNIT GATY-RELATED"/>
    <property type="match status" value="1"/>
</dbReference>
<dbReference type="Pfam" id="PF01116">
    <property type="entry name" value="F_bP_aldolase"/>
    <property type="match status" value="1"/>
</dbReference>
<dbReference type="PIRSF" id="PIRSF001359">
    <property type="entry name" value="F_bP_aldolase_II"/>
    <property type="match status" value="1"/>
</dbReference>
<dbReference type="SUPFAM" id="SSF51569">
    <property type="entry name" value="Aldolase"/>
    <property type="match status" value="1"/>
</dbReference>
<dbReference type="PROSITE" id="PS00602">
    <property type="entry name" value="ALDOLASE_CLASS_II_1"/>
    <property type="match status" value="1"/>
</dbReference>
<evidence type="ECO:0000250" key="1"/>
<evidence type="ECO:0000305" key="2"/>
<sequence length="332" mass="36189">MTSYKALGLVNTKDLFAKAVKGGYAIPAYNFNNLEQLQAIIQACVETRSPVILQVSSGARKYANATLLRNMARGAVEYAHELGVDIPIVLHLDHGDSLELCIDCIESGFSSVMIDGSALPYDENVALSRKVCEYAHARADYVTVEGELGVLAGVEDDVVAEKSHYTMPDEVEDFVKKTGVDSLAISIGTSHGRAKFTPEQCTRNADGVLIPPPLRFDILAEIEKRIPGFPIVLHGASSVPVEYVREVERYGGNLPDSVGIPEEQLRKAAKSAVCKVNIDSDGRLAMTAAIRRVLTTKVDEFDPRKYLGPARDELKKLYMHKNKEVLGSAGRA</sequence>